<comment type="function">
    <text evidence="1">Plays an essential role in the initiation and regulation of chromosomal replication. ATP-DnaA binds to the origin of replication (oriC) to initiate formation of the DNA replication initiation complex once per cell cycle. Binds the DnaA box (a 9 base pair repeat at the origin) and separates the double-stranded (ds)DNA. Forms a right-handed helical filament on oriC DNA; dsDNA binds to the exterior of the filament while single-stranded (ss)DNA is stabiized in the filament's interior. The ATP-DnaA-oriC complex binds and stabilizes one strand of the AT-rich DNA unwinding element (DUE), permitting loading of DNA polymerase. After initiation quickly degrades to an ADP-DnaA complex that is not apt for DNA replication. Binds acidic phospholipids.</text>
</comment>
<comment type="subunit">
    <text evidence="1">Oligomerizes as a right-handed, spiral filament on DNA at oriC.</text>
</comment>
<comment type="subcellular location">
    <subcellularLocation>
        <location evidence="1">Cytoplasm</location>
    </subcellularLocation>
</comment>
<comment type="domain">
    <text evidence="1">Domain I is involved in oligomerization and binding regulators, domain II is flexibile and of varying length in different bacteria, domain III forms the AAA+ region, while domain IV binds dsDNA.</text>
</comment>
<comment type="similarity">
    <text evidence="1">Belongs to the DnaA family.</text>
</comment>
<sequence length="448" mass="51324">MNTHLTETWEKAINIIKGELTEVSFNTWIKSINPISLENNSLKLAVPNDFTKGILESRYKDLIVNALKLLTSKKYNIDFIVTTEEKIEENQKNHNNEKSNIVVNDEMSTMLNPKYTFDSFVIGNSNRFAHAASLAVAESPAKAYNPLFIYGGVGLGKTHLMHAIGHYILHNNPKSQVVYVSSEKFTNELINSIKDDKNVEFRNKYRNIDILLVDDIQFIAGKERTQEEFFHTFNALYEANKQIIISSDRPPKEIPTLEDRLRSRFEWGLIADIQAPDFETRMAILKKKADVENLNIPNEVMVYIATKIKSNIRELEGALIRIVAFSSLTNKEISIDLASEALKDIISSKQTRQVTIDIIQEVVANYYNLKIEDLKSARRTRNIAFPRQIAMYLSRKLTDMSLPKIGEEFGGRDHTTVIHAYEKISNNLKKDESLQNAIKELNKRINQK</sequence>
<feature type="chain" id="PRO_1000048633" description="Chromosomal replication initiator protein DnaA">
    <location>
        <begin position="1"/>
        <end position="448"/>
    </location>
</feature>
<feature type="region of interest" description="Domain I, interacts with DnaA modulators" evidence="1">
    <location>
        <begin position="1"/>
        <end position="73"/>
    </location>
</feature>
<feature type="region of interest" description="Domain II" evidence="1">
    <location>
        <begin position="73"/>
        <end position="109"/>
    </location>
</feature>
<feature type="region of interest" description="Domain III, AAA+ region" evidence="1">
    <location>
        <begin position="110"/>
        <end position="326"/>
    </location>
</feature>
<feature type="region of interest" description="Domain IV, binds dsDNA" evidence="1">
    <location>
        <begin position="327"/>
        <end position="448"/>
    </location>
</feature>
<feature type="binding site" evidence="1">
    <location>
        <position position="154"/>
    </location>
    <ligand>
        <name>ATP</name>
        <dbReference type="ChEBI" id="CHEBI:30616"/>
    </ligand>
</feature>
<feature type="binding site" evidence="1">
    <location>
        <position position="156"/>
    </location>
    <ligand>
        <name>ATP</name>
        <dbReference type="ChEBI" id="CHEBI:30616"/>
    </ligand>
</feature>
<feature type="binding site" evidence="1">
    <location>
        <position position="157"/>
    </location>
    <ligand>
        <name>ATP</name>
        <dbReference type="ChEBI" id="CHEBI:30616"/>
    </ligand>
</feature>
<feature type="binding site" evidence="1">
    <location>
        <position position="158"/>
    </location>
    <ligand>
        <name>ATP</name>
        <dbReference type="ChEBI" id="CHEBI:30616"/>
    </ligand>
</feature>
<proteinExistence type="inferred from homology"/>
<evidence type="ECO:0000255" key="1">
    <source>
        <dbReference type="HAMAP-Rule" id="MF_00377"/>
    </source>
</evidence>
<name>DNAA_CLOBH</name>
<organism>
    <name type="scientific">Clostridium botulinum (strain Hall / ATCC 3502 / NCTC 13319 / Type A)</name>
    <dbReference type="NCBI Taxonomy" id="441771"/>
    <lineage>
        <taxon>Bacteria</taxon>
        <taxon>Bacillati</taxon>
        <taxon>Bacillota</taxon>
        <taxon>Clostridia</taxon>
        <taxon>Eubacteriales</taxon>
        <taxon>Clostridiaceae</taxon>
        <taxon>Clostridium</taxon>
    </lineage>
</organism>
<protein>
    <recommendedName>
        <fullName evidence="1">Chromosomal replication initiator protein DnaA</fullName>
    </recommendedName>
</protein>
<reference key="1">
    <citation type="journal article" date="2007" name="Genome Res.">
        <title>Genome sequence of a proteolytic (Group I) Clostridium botulinum strain Hall A and comparative analysis of the clostridial genomes.</title>
        <authorList>
            <person name="Sebaihia M."/>
            <person name="Peck M.W."/>
            <person name="Minton N.P."/>
            <person name="Thomson N.R."/>
            <person name="Holden M.T.G."/>
            <person name="Mitchell W.J."/>
            <person name="Carter A.T."/>
            <person name="Bentley S.D."/>
            <person name="Mason D.R."/>
            <person name="Crossman L."/>
            <person name="Paul C.J."/>
            <person name="Ivens A."/>
            <person name="Wells-Bennik M.H.J."/>
            <person name="Davis I.J."/>
            <person name="Cerdeno-Tarraga A.M."/>
            <person name="Churcher C."/>
            <person name="Quail M.A."/>
            <person name="Chillingworth T."/>
            <person name="Feltwell T."/>
            <person name="Fraser A."/>
            <person name="Goodhead I."/>
            <person name="Hance Z."/>
            <person name="Jagels K."/>
            <person name="Larke N."/>
            <person name="Maddison M."/>
            <person name="Moule S."/>
            <person name="Mungall K."/>
            <person name="Norbertczak H."/>
            <person name="Rabbinowitsch E."/>
            <person name="Sanders M."/>
            <person name="Simmonds M."/>
            <person name="White B."/>
            <person name="Whithead S."/>
            <person name="Parkhill J."/>
        </authorList>
    </citation>
    <scope>NUCLEOTIDE SEQUENCE [LARGE SCALE GENOMIC DNA]</scope>
    <source>
        <strain>Hall / ATCC 3502 / NCTC 13319 / Type A</strain>
    </source>
</reference>
<reference key="2">
    <citation type="journal article" date="2007" name="PLoS ONE">
        <title>Analysis of the neurotoxin complex genes in Clostridium botulinum A1-A4 and B1 strains: BoNT/A3, /Ba4 and /B1 clusters are located within plasmids.</title>
        <authorList>
            <person name="Smith T.J."/>
            <person name="Hill K.K."/>
            <person name="Foley B.T."/>
            <person name="Detter J.C."/>
            <person name="Munk A.C."/>
            <person name="Bruce D.C."/>
            <person name="Doggett N.A."/>
            <person name="Smith L.A."/>
            <person name="Marks J.D."/>
            <person name="Xie G."/>
            <person name="Brettin T.S."/>
        </authorList>
    </citation>
    <scope>NUCLEOTIDE SEQUENCE [LARGE SCALE GENOMIC DNA]</scope>
    <source>
        <strain>Hall / ATCC 3502 / NCTC 13319 / Type A</strain>
    </source>
</reference>
<dbReference type="EMBL" id="CP000727">
    <property type="protein sequence ID" value="ABS36825.1"/>
    <property type="molecule type" value="Genomic_DNA"/>
</dbReference>
<dbReference type="EMBL" id="AM412317">
    <property type="protein sequence ID" value="CAL81555.1"/>
    <property type="molecule type" value="Genomic_DNA"/>
</dbReference>
<dbReference type="RefSeq" id="WP_011947895.1">
    <property type="nucleotide sequence ID" value="NC_009698.1"/>
</dbReference>
<dbReference type="RefSeq" id="YP_001252553.1">
    <property type="nucleotide sequence ID" value="NC_009495.1"/>
</dbReference>
<dbReference type="RefSeq" id="YP_001385963.1">
    <property type="nucleotide sequence ID" value="NC_009698.1"/>
</dbReference>
<dbReference type="SMR" id="A5HXP7"/>
<dbReference type="GeneID" id="5187220"/>
<dbReference type="KEGG" id="cbh:CLC_0001"/>
<dbReference type="KEGG" id="cbo:CBO0001"/>
<dbReference type="PATRIC" id="fig|413999.7.peg.1"/>
<dbReference type="HOGENOM" id="CLU_026910_3_1_9"/>
<dbReference type="PRO" id="PR:A5HXP7"/>
<dbReference type="Proteomes" id="UP000001986">
    <property type="component" value="Chromosome"/>
</dbReference>
<dbReference type="GO" id="GO:0005737">
    <property type="term" value="C:cytoplasm"/>
    <property type="evidence" value="ECO:0007669"/>
    <property type="project" value="UniProtKB-SubCell"/>
</dbReference>
<dbReference type="GO" id="GO:0005886">
    <property type="term" value="C:plasma membrane"/>
    <property type="evidence" value="ECO:0000318"/>
    <property type="project" value="GO_Central"/>
</dbReference>
<dbReference type="GO" id="GO:0005524">
    <property type="term" value="F:ATP binding"/>
    <property type="evidence" value="ECO:0007669"/>
    <property type="project" value="UniProtKB-UniRule"/>
</dbReference>
<dbReference type="GO" id="GO:0016887">
    <property type="term" value="F:ATP hydrolysis activity"/>
    <property type="evidence" value="ECO:0007669"/>
    <property type="project" value="InterPro"/>
</dbReference>
<dbReference type="GO" id="GO:0003688">
    <property type="term" value="F:DNA replication origin binding"/>
    <property type="evidence" value="ECO:0000318"/>
    <property type="project" value="GO_Central"/>
</dbReference>
<dbReference type="GO" id="GO:0008289">
    <property type="term" value="F:lipid binding"/>
    <property type="evidence" value="ECO:0007669"/>
    <property type="project" value="UniProtKB-KW"/>
</dbReference>
<dbReference type="GO" id="GO:0006260">
    <property type="term" value="P:DNA replication"/>
    <property type="evidence" value="ECO:0000318"/>
    <property type="project" value="GO_Central"/>
</dbReference>
<dbReference type="GO" id="GO:0006270">
    <property type="term" value="P:DNA replication initiation"/>
    <property type="evidence" value="ECO:0000318"/>
    <property type="project" value="GO_Central"/>
</dbReference>
<dbReference type="GO" id="GO:0006275">
    <property type="term" value="P:regulation of DNA replication"/>
    <property type="evidence" value="ECO:0007669"/>
    <property type="project" value="UniProtKB-UniRule"/>
</dbReference>
<dbReference type="CDD" id="cd00009">
    <property type="entry name" value="AAA"/>
    <property type="match status" value="1"/>
</dbReference>
<dbReference type="CDD" id="cd06571">
    <property type="entry name" value="Bac_DnaA_C"/>
    <property type="match status" value="1"/>
</dbReference>
<dbReference type="FunFam" id="1.10.1750.10:FF:000003">
    <property type="entry name" value="Chromosomal replication initiator protein DnaA"/>
    <property type="match status" value="1"/>
</dbReference>
<dbReference type="FunFam" id="1.10.8.60:FF:000003">
    <property type="entry name" value="Chromosomal replication initiator protein DnaA"/>
    <property type="match status" value="1"/>
</dbReference>
<dbReference type="FunFam" id="3.40.50.300:FF:000150">
    <property type="entry name" value="Chromosomal replication initiator protein DnaA"/>
    <property type="match status" value="1"/>
</dbReference>
<dbReference type="Gene3D" id="1.10.1750.10">
    <property type="match status" value="1"/>
</dbReference>
<dbReference type="Gene3D" id="1.10.8.60">
    <property type="match status" value="1"/>
</dbReference>
<dbReference type="Gene3D" id="3.30.300.180">
    <property type="match status" value="1"/>
</dbReference>
<dbReference type="Gene3D" id="3.40.50.300">
    <property type="entry name" value="P-loop containing nucleotide triphosphate hydrolases"/>
    <property type="match status" value="1"/>
</dbReference>
<dbReference type="HAMAP" id="MF_00377">
    <property type="entry name" value="DnaA_bact"/>
    <property type="match status" value="1"/>
</dbReference>
<dbReference type="InterPro" id="IPR003593">
    <property type="entry name" value="AAA+_ATPase"/>
</dbReference>
<dbReference type="InterPro" id="IPR001957">
    <property type="entry name" value="Chromosome_initiator_DnaA"/>
</dbReference>
<dbReference type="InterPro" id="IPR020591">
    <property type="entry name" value="Chromosome_initiator_DnaA-like"/>
</dbReference>
<dbReference type="InterPro" id="IPR018312">
    <property type="entry name" value="Chromosome_initiator_DnaA_CS"/>
</dbReference>
<dbReference type="InterPro" id="IPR013159">
    <property type="entry name" value="DnaA_C"/>
</dbReference>
<dbReference type="InterPro" id="IPR013317">
    <property type="entry name" value="DnaA_dom"/>
</dbReference>
<dbReference type="InterPro" id="IPR024633">
    <property type="entry name" value="DnaA_N_dom"/>
</dbReference>
<dbReference type="InterPro" id="IPR038454">
    <property type="entry name" value="DnaA_N_sf"/>
</dbReference>
<dbReference type="InterPro" id="IPR027417">
    <property type="entry name" value="P-loop_NTPase"/>
</dbReference>
<dbReference type="InterPro" id="IPR010921">
    <property type="entry name" value="Trp_repressor/repl_initiator"/>
</dbReference>
<dbReference type="NCBIfam" id="TIGR00362">
    <property type="entry name" value="DnaA"/>
    <property type="match status" value="1"/>
</dbReference>
<dbReference type="NCBIfam" id="NF010686">
    <property type="entry name" value="PRK14086.1"/>
    <property type="match status" value="1"/>
</dbReference>
<dbReference type="PANTHER" id="PTHR30050">
    <property type="entry name" value="CHROMOSOMAL REPLICATION INITIATOR PROTEIN DNAA"/>
    <property type="match status" value="1"/>
</dbReference>
<dbReference type="PANTHER" id="PTHR30050:SF2">
    <property type="entry name" value="CHROMOSOMAL REPLICATION INITIATOR PROTEIN DNAA"/>
    <property type="match status" value="1"/>
</dbReference>
<dbReference type="Pfam" id="PF00308">
    <property type="entry name" value="Bac_DnaA"/>
    <property type="match status" value="1"/>
</dbReference>
<dbReference type="Pfam" id="PF08299">
    <property type="entry name" value="Bac_DnaA_C"/>
    <property type="match status" value="1"/>
</dbReference>
<dbReference type="Pfam" id="PF11638">
    <property type="entry name" value="DnaA_N"/>
    <property type="match status" value="1"/>
</dbReference>
<dbReference type="PRINTS" id="PR00051">
    <property type="entry name" value="DNAA"/>
</dbReference>
<dbReference type="SMART" id="SM00382">
    <property type="entry name" value="AAA"/>
    <property type="match status" value="1"/>
</dbReference>
<dbReference type="SMART" id="SM00760">
    <property type="entry name" value="Bac_DnaA_C"/>
    <property type="match status" value="1"/>
</dbReference>
<dbReference type="SUPFAM" id="SSF52540">
    <property type="entry name" value="P-loop containing nucleoside triphosphate hydrolases"/>
    <property type="match status" value="1"/>
</dbReference>
<dbReference type="SUPFAM" id="SSF48295">
    <property type="entry name" value="TrpR-like"/>
    <property type="match status" value="1"/>
</dbReference>
<dbReference type="PROSITE" id="PS01008">
    <property type="entry name" value="DNAA"/>
    <property type="match status" value="1"/>
</dbReference>
<keyword id="KW-0067">ATP-binding</keyword>
<keyword id="KW-0963">Cytoplasm</keyword>
<keyword id="KW-0235">DNA replication</keyword>
<keyword id="KW-0238">DNA-binding</keyword>
<keyword id="KW-0446">Lipid-binding</keyword>
<keyword id="KW-0547">Nucleotide-binding</keyword>
<keyword id="KW-1185">Reference proteome</keyword>
<accession>A5HXP7</accession>
<accession>A7FZS7</accession>
<gene>
    <name evidence="1" type="primary">dnaA</name>
    <name type="ordered locus">CBO0001</name>
    <name type="ordered locus">CLC_0001</name>
</gene>